<sequence>MKLFGTSGIRMKNLTPEIAYKVGFAVSQIAKNVVVGRDTRTTGDLIRNSLFAGLLNGGAEIVDIGIVPTPTLGYSARNYDMGIMITASHNPSEYNGIKLFNKDGTSFRPEQEQNIEDIIYNKKNQKRVSWNSIKKVWTDESALKKYSDFILDSVEINKNFSVVVDCANSAGCVASPYLFTDVGAHVISVNGHIDGRFIGRSPEPNEKNLQDTMHMIKGLNENNKGNKYIGIAHDGDADRMIAIDEKGRLTDFDKLLAVFSRYMAEKTGTKTIITTVDASMAIEEYLKDLNVNVIRTKVGDVAVSDELNKHDDAIFGGEPSGTWIHKDIHLTPDGILSGLRLLEMMEFYDKKLYELIDDVPCYSNLREKLPCPDDKKIIVMDFVIKNGENIFDAEVETIDGARFSLDDGWVLIRPSGTEPFVRVRVEAKNDIIAKELLEKGIKLVKDGLNEKK</sequence>
<evidence type="ECO:0000255" key="1">
    <source>
        <dbReference type="HAMAP-Rule" id="MF_01554"/>
    </source>
</evidence>
<protein>
    <recommendedName>
        <fullName evidence="1">Phosphoglucosamine mutase</fullName>
        <ecNumber evidence="1">5.4.2.10</ecNumber>
    </recommendedName>
</protein>
<proteinExistence type="inferred from homology"/>
<keyword id="KW-0413">Isomerase</keyword>
<keyword id="KW-0460">Magnesium</keyword>
<keyword id="KW-0479">Metal-binding</keyword>
<keyword id="KW-0597">Phosphoprotein</keyword>
<feature type="chain" id="PRO_0000337812" description="Phosphoglucosamine mutase">
    <location>
        <begin position="1"/>
        <end position="452"/>
    </location>
</feature>
<feature type="active site" description="Phosphoserine intermediate" evidence="1">
    <location>
        <position position="88"/>
    </location>
</feature>
<feature type="binding site" description="via phosphate group" evidence="1">
    <location>
        <position position="88"/>
    </location>
    <ligand>
        <name>Mg(2+)</name>
        <dbReference type="ChEBI" id="CHEBI:18420"/>
    </ligand>
</feature>
<feature type="binding site" evidence="1">
    <location>
        <position position="234"/>
    </location>
    <ligand>
        <name>Mg(2+)</name>
        <dbReference type="ChEBI" id="CHEBI:18420"/>
    </ligand>
</feature>
<feature type="binding site" evidence="1">
    <location>
        <position position="236"/>
    </location>
    <ligand>
        <name>Mg(2+)</name>
        <dbReference type="ChEBI" id="CHEBI:18420"/>
    </ligand>
</feature>
<feature type="binding site" evidence="1">
    <location>
        <position position="238"/>
    </location>
    <ligand>
        <name>Mg(2+)</name>
        <dbReference type="ChEBI" id="CHEBI:18420"/>
    </ligand>
</feature>
<feature type="modified residue" description="Phosphoserine" evidence="1">
    <location>
        <position position="88"/>
    </location>
</feature>
<reference key="1">
    <citation type="submission" date="2007-06" db="EMBL/GenBank/DDBJ databases">
        <title>Complete sequence of Methanococcus aeolicus Nankai-3.</title>
        <authorList>
            <consortium name="US DOE Joint Genome Institute"/>
            <person name="Copeland A."/>
            <person name="Lucas S."/>
            <person name="Lapidus A."/>
            <person name="Barry K."/>
            <person name="Glavina del Rio T."/>
            <person name="Dalin E."/>
            <person name="Tice H."/>
            <person name="Pitluck S."/>
            <person name="Chain P."/>
            <person name="Malfatti S."/>
            <person name="Shin M."/>
            <person name="Vergez L."/>
            <person name="Schmutz J."/>
            <person name="Larimer F."/>
            <person name="Land M."/>
            <person name="Hauser L."/>
            <person name="Kyrpides N."/>
            <person name="Lykidis A."/>
            <person name="Sieprawska-Lupa M."/>
            <person name="Whitman W.B."/>
            <person name="Richardson P."/>
        </authorList>
    </citation>
    <scope>NUCLEOTIDE SEQUENCE [LARGE SCALE GENOMIC DNA]</scope>
    <source>
        <strain>ATCC BAA-1280 / DSM 17508 / OCM 812 / Nankai-3</strain>
    </source>
</reference>
<name>GLMM_META3</name>
<organism>
    <name type="scientific">Methanococcus aeolicus (strain ATCC BAA-1280 / DSM 17508 / OCM 812 / Nankai-3)</name>
    <dbReference type="NCBI Taxonomy" id="419665"/>
    <lineage>
        <taxon>Archaea</taxon>
        <taxon>Methanobacteriati</taxon>
        <taxon>Methanobacteriota</taxon>
        <taxon>Methanomada group</taxon>
        <taxon>Methanococci</taxon>
        <taxon>Methanococcales</taxon>
        <taxon>Methanococcaceae</taxon>
        <taxon>Methanococcus</taxon>
    </lineage>
</organism>
<dbReference type="EC" id="5.4.2.10" evidence="1"/>
<dbReference type="EMBL" id="CP000743">
    <property type="protein sequence ID" value="ABR56019.1"/>
    <property type="molecule type" value="Genomic_DNA"/>
</dbReference>
<dbReference type="RefSeq" id="WP_011973151.1">
    <property type="nucleotide sequence ID" value="NC_009635.1"/>
</dbReference>
<dbReference type="SMR" id="A6UU47"/>
<dbReference type="STRING" id="419665.Maeo_0433"/>
<dbReference type="GeneID" id="5327194"/>
<dbReference type="KEGG" id="mae:Maeo_0433"/>
<dbReference type="eggNOG" id="arCOG00767">
    <property type="taxonomic scope" value="Archaea"/>
</dbReference>
<dbReference type="HOGENOM" id="CLU_016950_7_1_2"/>
<dbReference type="OrthoDB" id="10363at2157"/>
<dbReference type="Proteomes" id="UP000001106">
    <property type="component" value="Chromosome"/>
</dbReference>
<dbReference type="GO" id="GO:0000287">
    <property type="term" value="F:magnesium ion binding"/>
    <property type="evidence" value="ECO:0007669"/>
    <property type="project" value="UniProtKB-UniRule"/>
</dbReference>
<dbReference type="GO" id="GO:0008966">
    <property type="term" value="F:phosphoglucosamine mutase activity"/>
    <property type="evidence" value="ECO:0007669"/>
    <property type="project" value="UniProtKB-UniRule"/>
</dbReference>
<dbReference type="GO" id="GO:0005975">
    <property type="term" value="P:carbohydrate metabolic process"/>
    <property type="evidence" value="ECO:0007669"/>
    <property type="project" value="InterPro"/>
</dbReference>
<dbReference type="CDD" id="cd03087">
    <property type="entry name" value="PGM_like1"/>
    <property type="match status" value="1"/>
</dbReference>
<dbReference type="FunFam" id="3.40.120.10:FF:000001">
    <property type="entry name" value="Phosphoglucosamine mutase"/>
    <property type="match status" value="1"/>
</dbReference>
<dbReference type="FunFam" id="3.40.120.10:FF:000002">
    <property type="entry name" value="Phosphoglucosamine mutase"/>
    <property type="match status" value="1"/>
</dbReference>
<dbReference type="FunFam" id="3.30.310.50:FF:000009">
    <property type="entry name" value="Probable phosphoglucosamine mutase"/>
    <property type="match status" value="1"/>
</dbReference>
<dbReference type="Gene3D" id="3.40.120.10">
    <property type="entry name" value="Alpha-D-Glucose-1,6-Bisphosphate, subunit A, domain 3"/>
    <property type="match status" value="3"/>
</dbReference>
<dbReference type="Gene3D" id="3.30.310.50">
    <property type="entry name" value="Alpha-D-phosphohexomutase, C-terminal domain"/>
    <property type="match status" value="1"/>
</dbReference>
<dbReference type="HAMAP" id="MF_01554_A">
    <property type="entry name" value="GlmM_A"/>
    <property type="match status" value="1"/>
</dbReference>
<dbReference type="InterPro" id="IPR005844">
    <property type="entry name" value="A-D-PHexomutase_a/b/a-I"/>
</dbReference>
<dbReference type="InterPro" id="IPR016055">
    <property type="entry name" value="A-D-PHexomutase_a/b/a-I/II/III"/>
</dbReference>
<dbReference type="InterPro" id="IPR005845">
    <property type="entry name" value="A-D-PHexomutase_a/b/a-II"/>
</dbReference>
<dbReference type="InterPro" id="IPR005846">
    <property type="entry name" value="A-D-PHexomutase_a/b/a-III"/>
</dbReference>
<dbReference type="InterPro" id="IPR005843">
    <property type="entry name" value="A-D-PHexomutase_C"/>
</dbReference>
<dbReference type="InterPro" id="IPR036900">
    <property type="entry name" value="A-D-PHexomutase_C_sf"/>
</dbReference>
<dbReference type="InterPro" id="IPR016066">
    <property type="entry name" value="A-D-PHexomutase_CS"/>
</dbReference>
<dbReference type="InterPro" id="IPR005841">
    <property type="entry name" value="Alpha-D-phosphohexomutase_SF"/>
</dbReference>
<dbReference type="InterPro" id="IPR023666">
    <property type="entry name" value="GlmM_arc"/>
</dbReference>
<dbReference type="InterPro" id="IPR024086">
    <property type="entry name" value="GlmM_arc-type"/>
</dbReference>
<dbReference type="NCBIfam" id="TIGR03990">
    <property type="entry name" value="Arch_GlmM"/>
    <property type="match status" value="1"/>
</dbReference>
<dbReference type="PANTHER" id="PTHR43771">
    <property type="entry name" value="PHOSPHOMANNOMUTASE"/>
    <property type="match status" value="1"/>
</dbReference>
<dbReference type="PANTHER" id="PTHR43771:SF1">
    <property type="entry name" value="PHOSPHOMANNOMUTASE"/>
    <property type="match status" value="1"/>
</dbReference>
<dbReference type="Pfam" id="PF02878">
    <property type="entry name" value="PGM_PMM_I"/>
    <property type="match status" value="1"/>
</dbReference>
<dbReference type="Pfam" id="PF02879">
    <property type="entry name" value="PGM_PMM_II"/>
    <property type="match status" value="1"/>
</dbReference>
<dbReference type="Pfam" id="PF02880">
    <property type="entry name" value="PGM_PMM_III"/>
    <property type="match status" value="1"/>
</dbReference>
<dbReference type="Pfam" id="PF00408">
    <property type="entry name" value="PGM_PMM_IV"/>
    <property type="match status" value="1"/>
</dbReference>
<dbReference type="PRINTS" id="PR00509">
    <property type="entry name" value="PGMPMM"/>
</dbReference>
<dbReference type="SUPFAM" id="SSF55957">
    <property type="entry name" value="Phosphoglucomutase, C-terminal domain"/>
    <property type="match status" value="1"/>
</dbReference>
<dbReference type="SUPFAM" id="SSF53738">
    <property type="entry name" value="Phosphoglucomutase, first 3 domains"/>
    <property type="match status" value="3"/>
</dbReference>
<dbReference type="PROSITE" id="PS00710">
    <property type="entry name" value="PGM_PMM"/>
    <property type="match status" value="1"/>
</dbReference>
<gene>
    <name evidence="1" type="primary">glmM</name>
    <name type="ordered locus">Maeo_0433</name>
</gene>
<comment type="function">
    <text evidence="1">Catalyzes the conversion of glucosamine-6-phosphate to glucosamine-1-phosphate.</text>
</comment>
<comment type="catalytic activity">
    <reaction evidence="1">
        <text>alpha-D-glucosamine 1-phosphate = D-glucosamine 6-phosphate</text>
        <dbReference type="Rhea" id="RHEA:23424"/>
        <dbReference type="ChEBI" id="CHEBI:58516"/>
        <dbReference type="ChEBI" id="CHEBI:58725"/>
        <dbReference type="EC" id="5.4.2.10"/>
    </reaction>
</comment>
<comment type="cofactor">
    <cofactor evidence="1">
        <name>Mg(2+)</name>
        <dbReference type="ChEBI" id="CHEBI:18420"/>
    </cofactor>
    <text evidence="1">Binds 1 Mg(2+) ion per subunit.</text>
</comment>
<comment type="PTM">
    <text evidence="1">Activated by phosphorylation.</text>
</comment>
<comment type="similarity">
    <text evidence="1">Belongs to the phosphohexose mutase family.</text>
</comment>
<accession>A6UU47</accession>